<sequence length="574" mass="63676">MESLCGVLGFLLLAAGLPLQAAKRFRDVLGHEQYPDHMREHNQLRGWSSDENEWDEHLYPVWRRGDGRWKDSWEGGRVQAVLTSDSPALVGSNITFVVNLVFPRCQKEDANGNIVYEKNCRNDLGLTSDLHVYNWTAGADDGDWEDGTSRSQHLRFPDRRPFPRPHGWKKWSFVYVFHTLGQYFQKLGRCSARVSINTVNLTAGPQVMEVTVFRRYGRAYIPISKVKDVYVITDQIPVFVTMSQKNDRNLSDEIFLRDLPIVFDVLIHDPSHFLNDSAISYKWNFGDNTGLFVSNNHTLNHTYVLNGTFNLNLTVQTAVPGPCPPPSPSTPPPPSTPPSPPPSPLPTLSTPSPSLMPTGYKSMELSDISNENCRINRYGYFRATITIVEGILEVSIMQIADVPMPTPQPANSLMDFTVTCKGATPMEACTIISDPTCQIAQNRVCSPVAVDGLCLLSVRRAFNGSGTYCVNFTLGDDASLALTSTLISIPGKDPDSPLRAVNGVLISIGCLAVLVTMVTILLYKKHKAYKPIGNCPRNTVKGKGLSVLLSHAKAPFFRGDQEKDPLLQDKPRTL</sequence>
<accession>Q99P91</accession>
<accession>Q3U3R9</accession>
<accession>Q8BVV9</accession>
<accession>Q8BXL4</accession>
<accession>Q9QXA0</accession>
<protein>
    <recommendedName>
        <fullName>Transmembrane glycoprotein NMB</fullName>
    </recommendedName>
    <alternativeName>
        <fullName>DC-HIL</fullName>
    </alternativeName>
    <alternativeName>
        <fullName>Dendritic cell-associated transmembrane protein</fullName>
    </alternativeName>
    <alternativeName>
        <fullName>Osteoactivin</fullName>
    </alternativeName>
</protein>
<name>GPNMB_MOUSE</name>
<dbReference type="EMBL" id="AF322054">
    <property type="protein sequence ID" value="AAK14240.1"/>
    <property type="molecule type" value="mRNA"/>
</dbReference>
<dbReference type="EMBL" id="AJ251685">
    <property type="protein sequence ID" value="CAB65272.1"/>
    <property type="molecule type" value="mRNA"/>
</dbReference>
<dbReference type="EMBL" id="AK044764">
    <property type="protein sequence ID" value="BAC32074.1"/>
    <property type="molecule type" value="mRNA"/>
</dbReference>
<dbReference type="EMBL" id="AK076347">
    <property type="protein sequence ID" value="BAC36306.1"/>
    <property type="molecule type" value="mRNA"/>
</dbReference>
<dbReference type="EMBL" id="AK150739">
    <property type="protein sequence ID" value="BAE29813.1"/>
    <property type="molecule type" value="mRNA"/>
</dbReference>
<dbReference type="EMBL" id="AK154617">
    <property type="protein sequence ID" value="BAE32716.1"/>
    <property type="molecule type" value="mRNA"/>
</dbReference>
<dbReference type="EMBL" id="AK170506">
    <property type="protein sequence ID" value="BAE41844.1"/>
    <property type="molecule type" value="mRNA"/>
</dbReference>
<dbReference type="EMBL" id="AK171441">
    <property type="protein sequence ID" value="BAE42454.1"/>
    <property type="molecule type" value="mRNA"/>
</dbReference>
<dbReference type="EMBL" id="AK171465">
    <property type="protein sequence ID" value="BAE42471.1"/>
    <property type="molecule type" value="mRNA"/>
</dbReference>
<dbReference type="EMBL" id="AK171474">
    <property type="protein sequence ID" value="BAE42479.1"/>
    <property type="molecule type" value="mRNA"/>
</dbReference>
<dbReference type="EMBL" id="AK171517">
    <property type="protein sequence ID" value="BAE42501.1"/>
    <property type="molecule type" value="mRNA"/>
</dbReference>
<dbReference type="EMBL" id="BC026375">
    <property type="protein sequence ID" value="AAH26375.1"/>
    <property type="molecule type" value="mRNA"/>
</dbReference>
<dbReference type="CCDS" id="CCDS20122.1"/>
<dbReference type="RefSeq" id="NP_444340.3">
    <property type="nucleotide sequence ID" value="NM_053110.4"/>
</dbReference>
<dbReference type="BioGRID" id="220244">
    <property type="interactions" value="3"/>
</dbReference>
<dbReference type="FunCoup" id="Q99P91">
    <property type="interactions" value="457"/>
</dbReference>
<dbReference type="IntAct" id="Q99P91">
    <property type="interactions" value="2"/>
</dbReference>
<dbReference type="STRING" id="10090.ENSMUSP00000031840"/>
<dbReference type="GlyCosmos" id="Q99P91">
    <property type="glycosylation" value="11 sites, No reported glycans"/>
</dbReference>
<dbReference type="GlyGen" id="Q99P91">
    <property type="glycosylation" value="15 sites, 2 N-linked glycans (2 sites)"/>
</dbReference>
<dbReference type="iPTMnet" id="Q99P91"/>
<dbReference type="PhosphoSitePlus" id="Q99P91"/>
<dbReference type="PaxDb" id="10090-ENSMUSP00000031840"/>
<dbReference type="ProteomicsDB" id="271153"/>
<dbReference type="Pumba" id="Q99P91"/>
<dbReference type="Antibodypedia" id="12086">
    <property type="antibodies" value="488 antibodies from 36 providers"/>
</dbReference>
<dbReference type="DNASU" id="93695"/>
<dbReference type="Ensembl" id="ENSMUST00000031840.10">
    <property type="protein sequence ID" value="ENSMUSP00000031840.8"/>
    <property type="gene ID" value="ENSMUSG00000029816.11"/>
</dbReference>
<dbReference type="GeneID" id="93695"/>
<dbReference type="KEGG" id="mmu:93695"/>
<dbReference type="UCSC" id="uc012elo.1">
    <property type="organism name" value="mouse"/>
</dbReference>
<dbReference type="AGR" id="MGI:1934765"/>
<dbReference type="CTD" id="10457"/>
<dbReference type="MGI" id="MGI:1934765">
    <property type="gene designation" value="Gpnmb"/>
</dbReference>
<dbReference type="VEuPathDB" id="HostDB:ENSMUSG00000029816"/>
<dbReference type="eggNOG" id="ENOG502QVWX">
    <property type="taxonomic scope" value="Eukaryota"/>
</dbReference>
<dbReference type="GeneTree" id="ENSGT00950000183188"/>
<dbReference type="HOGENOM" id="CLU_017264_1_0_1"/>
<dbReference type="InParanoid" id="Q99P91"/>
<dbReference type="OMA" id="HGWRKWN"/>
<dbReference type="OrthoDB" id="9940970at2759"/>
<dbReference type="PhylomeDB" id="Q99P91"/>
<dbReference type="TreeFam" id="TF334865"/>
<dbReference type="Reactome" id="R-MMU-8857538">
    <property type="pathway name" value="PTK6 promotes HIF1A stabilization"/>
</dbReference>
<dbReference type="BioGRID-ORCS" id="93695">
    <property type="hits" value="5 hits in 78 CRISPR screens"/>
</dbReference>
<dbReference type="ChiTaRS" id="Gpnmb">
    <property type="organism name" value="mouse"/>
</dbReference>
<dbReference type="PRO" id="PR:Q99P91"/>
<dbReference type="Proteomes" id="UP000000589">
    <property type="component" value="Chromosome 6"/>
</dbReference>
<dbReference type="RNAct" id="Q99P91">
    <property type="molecule type" value="protein"/>
</dbReference>
<dbReference type="Bgee" id="ENSMUSG00000029816">
    <property type="expression patterns" value="Expressed in vault of skull and 110 other cell types or tissues"/>
</dbReference>
<dbReference type="ExpressionAtlas" id="Q99P91">
    <property type="expression patterns" value="baseline and differential"/>
</dbReference>
<dbReference type="GO" id="GO:0031410">
    <property type="term" value="C:cytoplasmic vesicle"/>
    <property type="evidence" value="ECO:0000314"/>
    <property type="project" value="MGI"/>
</dbReference>
<dbReference type="GO" id="GO:0031901">
    <property type="term" value="C:early endosome membrane"/>
    <property type="evidence" value="ECO:0007669"/>
    <property type="project" value="UniProtKB-SubCell"/>
</dbReference>
<dbReference type="GO" id="GO:0033162">
    <property type="term" value="C:melanosome membrane"/>
    <property type="evidence" value="ECO:0007669"/>
    <property type="project" value="UniProtKB-SubCell"/>
</dbReference>
<dbReference type="GO" id="GO:0005886">
    <property type="term" value="C:plasma membrane"/>
    <property type="evidence" value="ECO:0000314"/>
    <property type="project" value="MGI"/>
</dbReference>
<dbReference type="GO" id="GO:0008201">
    <property type="term" value="F:heparin binding"/>
    <property type="evidence" value="ECO:0000314"/>
    <property type="project" value="MGI"/>
</dbReference>
<dbReference type="GO" id="GO:0005178">
    <property type="term" value="F:integrin binding"/>
    <property type="evidence" value="ECO:0000314"/>
    <property type="project" value="MGI"/>
</dbReference>
<dbReference type="GO" id="GO:0048018">
    <property type="term" value="F:receptor ligand activity"/>
    <property type="evidence" value="ECO:0007669"/>
    <property type="project" value="Ensembl"/>
</dbReference>
<dbReference type="GO" id="GO:0045545">
    <property type="term" value="F:syndecan binding"/>
    <property type="evidence" value="ECO:0007669"/>
    <property type="project" value="Ensembl"/>
</dbReference>
<dbReference type="GO" id="GO:0030282">
    <property type="term" value="P:bone mineralization"/>
    <property type="evidence" value="ECO:0007669"/>
    <property type="project" value="Ensembl"/>
</dbReference>
<dbReference type="GO" id="GO:0007155">
    <property type="term" value="P:cell adhesion"/>
    <property type="evidence" value="ECO:0000314"/>
    <property type="project" value="MGI"/>
</dbReference>
<dbReference type="GO" id="GO:0007267">
    <property type="term" value="P:cell-cell signaling"/>
    <property type="evidence" value="ECO:0007669"/>
    <property type="project" value="Ensembl"/>
</dbReference>
<dbReference type="GO" id="GO:2000134">
    <property type="term" value="P:negative regulation of G1/S transition of mitotic cell cycle"/>
    <property type="evidence" value="ECO:0007669"/>
    <property type="project" value="Ensembl"/>
</dbReference>
<dbReference type="GO" id="GO:0042130">
    <property type="term" value="P:negative regulation of T cell proliferation"/>
    <property type="evidence" value="ECO:0007669"/>
    <property type="project" value="Ensembl"/>
</dbReference>
<dbReference type="GO" id="GO:0032720">
    <property type="term" value="P:negative regulation of tumor necrosis factor production"/>
    <property type="evidence" value="ECO:0000315"/>
    <property type="project" value="CACAO"/>
</dbReference>
<dbReference type="GO" id="GO:0001649">
    <property type="term" value="P:osteoblast differentiation"/>
    <property type="evidence" value="ECO:0007669"/>
    <property type="project" value="Ensembl"/>
</dbReference>
<dbReference type="GO" id="GO:0030335">
    <property type="term" value="P:positive regulation of cell migration"/>
    <property type="evidence" value="ECO:0007669"/>
    <property type="project" value="Ensembl"/>
</dbReference>
<dbReference type="GO" id="GO:0070374">
    <property type="term" value="P:positive regulation of ERK1 and ERK2 cascade"/>
    <property type="evidence" value="ECO:0000314"/>
    <property type="project" value="ParkinsonsUK-UCL"/>
</dbReference>
<dbReference type="GO" id="GO:0034103">
    <property type="term" value="P:regulation of tissue remodeling"/>
    <property type="evidence" value="ECO:0000315"/>
    <property type="project" value="ParkinsonsUK-UCL"/>
</dbReference>
<dbReference type="CDD" id="cd00146">
    <property type="entry name" value="PKD"/>
    <property type="match status" value="1"/>
</dbReference>
<dbReference type="FunFam" id="2.60.40.10:FF:000893">
    <property type="entry name" value="Transmembrane glycoprotein NMB"/>
    <property type="match status" value="1"/>
</dbReference>
<dbReference type="Gene3D" id="2.60.40.10">
    <property type="entry name" value="Immunoglobulins"/>
    <property type="match status" value="1"/>
</dbReference>
<dbReference type="InterPro" id="IPR013783">
    <property type="entry name" value="Ig-like_fold"/>
</dbReference>
<dbReference type="InterPro" id="IPR045219">
    <property type="entry name" value="PKAT"/>
</dbReference>
<dbReference type="InterPro" id="IPR046846">
    <property type="entry name" value="PKAT_KLD"/>
</dbReference>
<dbReference type="InterPro" id="IPR022409">
    <property type="entry name" value="PKD/Chitinase_dom"/>
</dbReference>
<dbReference type="InterPro" id="IPR000601">
    <property type="entry name" value="PKD_dom"/>
</dbReference>
<dbReference type="InterPro" id="IPR035986">
    <property type="entry name" value="PKD_dom_sf"/>
</dbReference>
<dbReference type="PANTHER" id="PTHR11861">
    <property type="entry name" value="MELANOCYTE PROTEIN PMEL 17-RELATED"/>
    <property type="match status" value="1"/>
</dbReference>
<dbReference type="PANTHER" id="PTHR11861:SF11">
    <property type="entry name" value="TRANSMEMBRANE GLYCOPROTEIN NMB"/>
    <property type="match status" value="1"/>
</dbReference>
<dbReference type="Pfam" id="PF20433">
    <property type="entry name" value="PKAT_KLD"/>
    <property type="match status" value="1"/>
</dbReference>
<dbReference type="Pfam" id="PF18911">
    <property type="entry name" value="PKD_4"/>
    <property type="match status" value="1"/>
</dbReference>
<dbReference type="SMART" id="SM00089">
    <property type="entry name" value="PKD"/>
    <property type="match status" value="1"/>
</dbReference>
<dbReference type="SUPFAM" id="SSF49299">
    <property type="entry name" value="PKD domain"/>
    <property type="match status" value="1"/>
</dbReference>
<dbReference type="PROSITE" id="PS50093">
    <property type="entry name" value="PKD"/>
    <property type="match status" value="1"/>
</dbReference>
<proteinExistence type="evidence at protein level"/>
<reference key="1">
    <citation type="journal article" date="2001" name="J. Biol. Chem.">
        <title>Molecular cloning of a dendritic cell-associated transmembrane protein, DC-HIL, that promotes RGD-dependent adhesion of endothelial cells through recognition of heparan sulfate proteoglycans.</title>
        <authorList>
            <person name="Shikano S."/>
            <person name="Bonkobara M."/>
            <person name="Zukas P.K."/>
            <person name="Ariizumi K."/>
        </authorList>
    </citation>
    <scope>NUCLEOTIDE SEQUENCE [MRNA]</scope>
    <source>
        <strain>BALB/cJ</strain>
    </source>
</reference>
<reference key="2">
    <citation type="journal article" date="2002" name="Gene Expr. Patterns">
        <title>mRNA expression of the murine glycoprotein (transmembrane) nmb (Gpnmb) gene is linked to the developing retinal pigment epithelium and iris.</title>
        <authorList>
            <person name="Bachner D."/>
            <person name="Schroder D."/>
            <person name="Gross G."/>
        </authorList>
    </citation>
    <scope>NUCLEOTIDE SEQUENCE [MRNA]</scope>
    <scope>DEVELOPMENTAL STAGE</scope>
</reference>
<reference key="3">
    <citation type="journal article" date="2005" name="Science">
        <title>The transcriptional landscape of the mammalian genome.</title>
        <authorList>
            <person name="Carninci P."/>
            <person name="Kasukawa T."/>
            <person name="Katayama S."/>
            <person name="Gough J."/>
            <person name="Frith M.C."/>
            <person name="Maeda N."/>
            <person name="Oyama R."/>
            <person name="Ravasi T."/>
            <person name="Lenhard B."/>
            <person name="Wells C."/>
            <person name="Kodzius R."/>
            <person name="Shimokawa K."/>
            <person name="Bajic V.B."/>
            <person name="Brenner S.E."/>
            <person name="Batalov S."/>
            <person name="Forrest A.R."/>
            <person name="Zavolan M."/>
            <person name="Davis M.J."/>
            <person name="Wilming L.G."/>
            <person name="Aidinis V."/>
            <person name="Allen J.E."/>
            <person name="Ambesi-Impiombato A."/>
            <person name="Apweiler R."/>
            <person name="Aturaliya R.N."/>
            <person name="Bailey T.L."/>
            <person name="Bansal M."/>
            <person name="Baxter L."/>
            <person name="Beisel K.W."/>
            <person name="Bersano T."/>
            <person name="Bono H."/>
            <person name="Chalk A.M."/>
            <person name="Chiu K.P."/>
            <person name="Choudhary V."/>
            <person name="Christoffels A."/>
            <person name="Clutterbuck D.R."/>
            <person name="Crowe M.L."/>
            <person name="Dalla E."/>
            <person name="Dalrymple B.P."/>
            <person name="de Bono B."/>
            <person name="Della Gatta G."/>
            <person name="di Bernardo D."/>
            <person name="Down T."/>
            <person name="Engstrom P."/>
            <person name="Fagiolini M."/>
            <person name="Faulkner G."/>
            <person name="Fletcher C.F."/>
            <person name="Fukushima T."/>
            <person name="Furuno M."/>
            <person name="Futaki S."/>
            <person name="Gariboldi M."/>
            <person name="Georgii-Hemming P."/>
            <person name="Gingeras T.R."/>
            <person name="Gojobori T."/>
            <person name="Green R.E."/>
            <person name="Gustincich S."/>
            <person name="Harbers M."/>
            <person name="Hayashi Y."/>
            <person name="Hensch T.K."/>
            <person name="Hirokawa N."/>
            <person name="Hill D."/>
            <person name="Huminiecki L."/>
            <person name="Iacono M."/>
            <person name="Ikeo K."/>
            <person name="Iwama A."/>
            <person name="Ishikawa T."/>
            <person name="Jakt M."/>
            <person name="Kanapin A."/>
            <person name="Katoh M."/>
            <person name="Kawasawa Y."/>
            <person name="Kelso J."/>
            <person name="Kitamura H."/>
            <person name="Kitano H."/>
            <person name="Kollias G."/>
            <person name="Krishnan S.P."/>
            <person name="Kruger A."/>
            <person name="Kummerfeld S.K."/>
            <person name="Kurochkin I.V."/>
            <person name="Lareau L.F."/>
            <person name="Lazarevic D."/>
            <person name="Lipovich L."/>
            <person name="Liu J."/>
            <person name="Liuni S."/>
            <person name="McWilliam S."/>
            <person name="Madan Babu M."/>
            <person name="Madera M."/>
            <person name="Marchionni L."/>
            <person name="Matsuda H."/>
            <person name="Matsuzawa S."/>
            <person name="Miki H."/>
            <person name="Mignone F."/>
            <person name="Miyake S."/>
            <person name="Morris K."/>
            <person name="Mottagui-Tabar S."/>
            <person name="Mulder N."/>
            <person name="Nakano N."/>
            <person name="Nakauchi H."/>
            <person name="Ng P."/>
            <person name="Nilsson R."/>
            <person name="Nishiguchi S."/>
            <person name="Nishikawa S."/>
            <person name="Nori F."/>
            <person name="Ohara O."/>
            <person name="Okazaki Y."/>
            <person name="Orlando V."/>
            <person name="Pang K.C."/>
            <person name="Pavan W.J."/>
            <person name="Pavesi G."/>
            <person name="Pesole G."/>
            <person name="Petrovsky N."/>
            <person name="Piazza S."/>
            <person name="Reed J."/>
            <person name="Reid J.F."/>
            <person name="Ring B.Z."/>
            <person name="Ringwald M."/>
            <person name="Rost B."/>
            <person name="Ruan Y."/>
            <person name="Salzberg S.L."/>
            <person name="Sandelin A."/>
            <person name="Schneider C."/>
            <person name="Schoenbach C."/>
            <person name="Sekiguchi K."/>
            <person name="Semple C.A."/>
            <person name="Seno S."/>
            <person name="Sessa L."/>
            <person name="Sheng Y."/>
            <person name="Shibata Y."/>
            <person name="Shimada H."/>
            <person name="Shimada K."/>
            <person name="Silva D."/>
            <person name="Sinclair B."/>
            <person name="Sperling S."/>
            <person name="Stupka E."/>
            <person name="Sugiura K."/>
            <person name="Sultana R."/>
            <person name="Takenaka Y."/>
            <person name="Taki K."/>
            <person name="Tammoja K."/>
            <person name="Tan S.L."/>
            <person name="Tang S."/>
            <person name="Taylor M.S."/>
            <person name="Tegner J."/>
            <person name="Teichmann S.A."/>
            <person name="Ueda H.R."/>
            <person name="van Nimwegen E."/>
            <person name="Verardo R."/>
            <person name="Wei C.L."/>
            <person name="Yagi K."/>
            <person name="Yamanishi H."/>
            <person name="Zabarovsky E."/>
            <person name="Zhu S."/>
            <person name="Zimmer A."/>
            <person name="Hide W."/>
            <person name="Bult C."/>
            <person name="Grimmond S.M."/>
            <person name="Teasdale R.D."/>
            <person name="Liu E.T."/>
            <person name="Brusic V."/>
            <person name="Quackenbush J."/>
            <person name="Wahlestedt C."/>
            <person name="Mattick J.S."/>
            <person name="Hume D.A."/>
            <person name="Kai C."/>
            <person name="Sasaki D."/>
            <person name="Tomaru Y."/>
            <person name="Fukuda S."/>
            <person name="Kanamori-Katayama M."/>
            <person name="Suzuki M."/>
            <person name="Aoki J."/>
            <person name="Arakawa T."/>
            <person name="Iida J."/>
            <person name="Imamura K."/>
            <person name="Itoh M."/>
            <person name="Kato T."/>
            <person name="Kawaji H."/>
            <person name="Kawagashira N."/>
            <person name="Kawashima T."/>
            <person name="Kojima M."/>
            <person name="Kondo S."/>
            <person name="Konno H."/>
            <person name="Nakano K."/>
            <person name="Ninomiya N."/>
            <person name="Nishio T."/>
            <person name="Okada M."/>
            <person name="Plessy C."/>
            <person name="Shibata K."/>
            <person name="Shiraki T."/>
            <person name="Suzuki S."/>
            <person name="Tagami M."/>
            <person name="Waki K."/>
            <person name="Watahiki A."/>
            <person name="Okamura-Oho Y."/>
            <person name="Suzuki H."/>
            <person name="Kawai J."/>
            <person name="Hayashizaki Y."/>
        </authorList>
    </citation>
    <scope>NUCLEOTIDE SEQUENCE [LARGE SCALE MRNA]</scope>
    <source>
        <strain>C57BL/6J</strain>
        <strain>NOD</strain>
        <tissue>Bone marrow</tissue>
        <tissue>Retina</tissue>
        <tissue>Skin</tissue>
    </source>
</reference>
<reference key="4">
    <citation type="journal article" date="2004" name="Genome Res.">
        <title>The status, quality, and expansion of the NIH full-length cDNA project: the Mammalian Gene Collection (MGC).</title>
        <authorList>
            <consortium name="The MGC Project Team"/>
        </authorList>
    </citation>
    <scope>NUCLEOTIDE SEQUENCE [LARGE SCALE MRNA]</scope>
    <source>
        <strain>FVB/N</strain>
        <tissue>Salivary gland</tissue>
    </source>
</reference>
<reference key="5">
    <citation type="journal article" date="2007" name="Mol. Cancer Res.">
        <title>Osteoactivin promotes breast cancer metastasis to bone.</title>
        <authorList>
            <person name="Rose A.A."/>
            <person name="Pepin F."/>
            <person name="Russo C."/>
            <person name="Abou Khalil J.E."/>
            <person name="Hallett M."/>
            <person name="Siegel P.M."/>
        </authorList>
    </citation>
    <scope>TISSUE SPECIFICITY</scope>
</reference>
<reference key="6">
    <citation type="journal article" date="2009" name="Immunity">
        <title>The phagosomal proteome in interferon-gamma-activated macrophages.</title>
        <authorList>
            <person name="Trost M."/>
            <person name="English L."/>
            <person name="Lemieux S."/>
            <person name="Courcelles M."/>
            <person name="Desjardins M."/>
            <person name="Thibault P."/>
        </authorList>
    </citation>
    <scope>PHOSPHORYLATION [LARGE SCALE ANALYSIS] AT SER-546</scope>
    <scope>IDENTIFICATION BY MASS SPECTROMETRY [LARGE SCALE ANALYSIS]</scope>
</reference>
<keyword id="KW-1003">Cell membrane</keyword>
<keyword id="KW-0967">Endosome</keyword>
<keyword id="KW-0325">Glycoprotein</keyword>
<keyword id="KW-0472">Membrane</keyword>
<keyword id="KW-0597">Phosphoprotein</keyword>
<keyword id="KW-1185">Reference proteome</keyword>
<keyword id="KW-0732">Signal</keyword>
<keyword id="KW-0812">Transmembrane</keyword>
<keyword id="KW-1133">Transmembrane helix</keyword>
<evidence type="ECO:0000250" key="1"/>
<evidence type="ECO:0000250" key="2">
    <source>
        <dbReference type="UniProtKB" id="Q14956"/>
    </source>
</evidence>
<evidence type="ECO:0000255" key="3"/>
<evidence type="ECO:0000255" key="4">
    <source>
        <dbReference type="PROSITE-ProRule" id="PRU00151"/>
    </source>
</evidence>
<evidence type="ECO:0000256" key="5">
    <source>
        <dbReference type="SAM" id="MobiDB-lite"/>
    </source>
</evidence>
<evidence type="ECO:0000269" key="6">
    <source>
    </source>
</evidence>
<evidence type="ECO:0000269" key="7">
    <source>
    </source>
</evidence>
<evidence type="ECO:0000305" key="8"/>
<evidence type="ECO:0007744" key="9">
    <source>
    </source>
</evidence>
<comment type="function">
    <text evidence="1">Could be a melanogenic enzyme.</text>
</comment>
<comment type="subcellular location">
    <subcellularLocation>
        <location>Cell membrane</location>
        <topology evidence="2">Single-pass type I membrane protein</topology>
    </subcellularLocation>
    <subcellularLocation>
        <location>Melanosome membrane</location>
        <topology evidence="2">Single-pass type I membrane protein</topology>
    </subcellularLocation>
    <subcellularLocation>
        <location>Early endosome membrane</location>
        <topology evidence="2">Single-pass type I membrane protein</topology>
    </subcellularLocation>
    <text evidence="2">Identified by mass spectrometry in melanosome fractions from stage I to stage IV.</text>
</comment>
<comment type="tissue specificity">
    <text evidence="7">May be up-regulated in bone metastatic breast cancer cells.</text>
</comment>
<comment type="developmental stage">
    <text evidence="6">At 9.5-10.5 dpc, highly expressed in the developing eye, restricted to the outer layer of the retina. At midgestation development, expression gets restricted to the forming retinal pigment layer. At 18.5 dpc, expression remains high in the retinal pigment epithelium and is also observed at the forming iris.</text>
</comment>
<comment type="similarity">
    <text evidence="8">Belongs to the PMEL/NMB family.</text>
</comment>
<organism>
    <name type="scientific">Mus musculus</name>
    <name type="common">Mouse</name>
    <dbReference type="NCBI Taxonomy" id="10090"/>
    <lineage>
        <taxon>Eukaryota</taxon>
        <taxon>Metazoa</taxon>
        <taxon>Chordata</taxon>
        <taxon>Craniata</taxon>
        <taxon>Vertebrata</taxon>
        <taxon>Euteleostomi</taxon>
        <taxon>Mammalia</taxon>
        <taxon>Eutheria</taxon>
        <taxon>Euarchontoglires</taxon>
        <taxon>Glires</taxon>
        <taxon>Rodentia</taxon>
        <taxon>Myomorpha</taxon>
        <taxon>Muroidea</taxon>
        <taxon>Muridae</taxon>
        <taxon>Murinae</taxon>
        <taxon>Mus</taxon>
        <taxon>Mus</taxon>
    </lineage>
</organism>
<gene>
    <name type="primary">Gpnmb</name>
    <name type="synonym">Dchil</name>
    <name type="synonym">Hgfin</name>
    <name type="synonym">Nmb</name>
</gene>
<feature type="signal peptide" evidence="3">
    <location>
        <begin position="1"/>
        <end position="22"/>
    </location>
</feature>
<feature type="chain" id="PRO_0000024710" description="Transmembrane glycoprotein NMB">
    <location>
        <begin position="23"/>
        <end position="574"/>
    </location>
</feature>
<feature type="topological domain" description="Extracellular" evidence="3">
    <location>
        <begin position="23"/>
        <end position="502"/>
    </location>
</feature>
<feature type="transmembrane region" description="Helical" evidence="3">
    <location>
        <begin position="503"/>
        <end position="523"/>
    </location>
</feature>
<feature type="topological domain" description="Cytoplasmic" evidence="3">
    <location>
        <begin position="524"/>
        <end position="574"/>
    </location>
</feature>
<feature type="domain" description="PKD" evidence="4">
    <location>
        <begin position="250"/>
        <end position="338"/>
    </location>
</feature>
<feature type="region of interest" description="Disordered" evidence="5">
    <location>
        <begin position="320"/>
        <end position="353"/>
    </location>
</feature>
<feature type="short sequence motif" description="Cell attachment site" evidence="3">
    <location>
        <begin position="558"/>
        <end position="560"/>
    </location>
</feature>
<feature type="compositionally biased region" description="Pro residues" evidence="5">
    <location>
        <begin position="321"/>
        <end position="345"/>
    </location>
</feature>
<feature type="modified residue" description="Phosphoserine" evidence="9">
    <location>
        <position position="546"/>
    </location>
</feature>
<feature type="glycosylation site" description="N-linked (GlcNAc...) asparagine" evidence="3">
    <location>
        <position position="93"/>
    </location>
</feature>
<feature type="glycosylation site" description="N-linked (GlcNAc...) asparagine" evidence="3">
    <location>
        <position position="134"/>
    </location>
</feature>
<feature type="glycosylation site" description="N-linked (GlcNAc...) asparagine" evidence="3">
    <location>
        <position position="200"/>
    </location>
</feature>
<feature type="glycosylation site" description="N-linked (GlcNAc...) asparagine" evidence="3">
    <location>
        <position position="249"/>
    </location>
</feature>
<feature type="glycosylation site" description="N-linked (GlcNAc...) asparagine" evidence="3">
    <location>
        <position position="275"/>
    </location>
</feature>
<feature type="glycosylation site" description="N-linked (GlcNAc...) asparagine" evidence="3">
    <location>
        <position position="296"/>
    </location>
</feature>
<feature type="glycosylation site" description="N-linked (GlcNAc...) asparagine" evidence="3">
    <location>
        <position position="300"/>
    </location>
</feature>
<feature type="glycosylation site" description="N-linked (GlcNAc...) asparagine" evidence="3">
    <location>
        <position position="306"/>
    </location>
</feature>
<feature type="glycosylation site" description="N-linked (GlcNAc...) asparagine" evidence="3">
    <location>
        <position position="312"/>
    </location>
</feature>
<feature type="glycosylation site" description="N-linked (GlcNAc...) asparagine" evidence="3">
    <location>
        <position position="463"/>
    </location>
</feature>
<feature type="glycosylation site" description="N-linked (GlcNAc...) asparagine" evidence="3">
    <location>
        <position position="471"/>
    </location>
</feature>
<feature type="sequence conflict" description="In Ref. 1; AAK14240, 3; BAC32074 and 4; AAH26375." evidence="8" ref="1 3 4">
    <original>D</original>
    <variation>N</variation>
    <location>
        <position position="36"/>
    </location>
</feature>
<feature type="sequence conflict" description="In Ref. 2; CAB65272." evidence="8" ref="2">
    <original>P</original>
    <variation>S</variation>
    <location>
        <position position="333"/>
    </location>
</feature>
<feature type="sequence conflict" description="In Ref. 2; CAB65272." evidence="8" ref="2">
    <original>SPP</original>
    <variation>LPS</variation>
    <location>
        <begin position="339"/>
        <end position="341"/>
    </location>
</feature>
<feature type="sequence conflict" description="In Ref. 3; BAC32074." evidence="8" ref="3">
    <original>L</original>
    <variation>M</variation>
    <location>
        <position position="498"/>
    </location>
</feature>
<feature type="sequence conflict" description="In Ref. 3; BAC32074." evidence="8" ref="3">
    <original>K</original>
    <variation>E</variation>
    <location>
        <position position="541"/>
    </location>
</feature>